<gene>
    <name type="primary">ytoA</name>
    <name type="ordered locus">BSU30520</name>
</gene>
<feature type="chain" id="PRO_0000360790" description="Uncharacterized transferase YtoA">
    <location>
        <begin position="1"/>
        <end position="171"/>
    </location>
</feature>
<organism>
    <name type="scientific">Bacillus subtilis (strain 168)</name>
    <dbReference type="NCBI Taxonomy" id="224308"/>
    <lineage>
        <taxon>Bacteria</taxon>
        <taxon>Bacillati</taxon>
        <taxon>Bacillota</taxon>
        <taxon>Bacilli</taxon>
        <taxon>Bacillales</taxon>
        <taxon>Bacillaceae</taxon>
        <taxon>Bacillus</taxon>
    </lineage>
</organism>
<sequence>MIYPYKEHKPDIHPTAFIADNATITGDVVIGEQSSIWFSVVIRGDVAPTRIGNRVNIQDLSCLHQSPNKTLLIEDDATIGHQVTLHSAVIRKNALIGMGSIILDGAEIGEGAFIGAGSLVPPGKIIPPGHLAFGRPAKVIRPLTEEDRKDMQRIRSEYVEKGQYYKFLQQT</sequence>
<comment type="similarity">
    <text evidence="1">Belongs to the transferase hexapeptide repeat family.</text>
</comment>
<accession>O34696</accession>
<accession>Q795P6</accession>
<evidence type="ECO:0000305" key="1"/>
<keyword id="KW-1185">Reference proteome</keyword>
<keyword id="KW-0808">Transferase</keyword>
<proteinExistence type="inferred from homology"/>
<name>YTOA_BACSU</name>
<dbReference type="EC" id="2.-.-.-"/>
<dbReference type="EMBL" id="AF008220">
    <property type="protein sequence ID" value="AAC00378.1"/>
    <property type="molecule type" value="Genomic_DNA"/>
</dbReference>
<dbReference type="EMBL" id="AL009126">
    <property type="protein sequence ID" value="CAB15030.1"/>
    <property type="molecule type" value="Genomic_DNA"/>
</dbReference>
<dbReference type="PIR" id="H69997">
    <property type="entry name" value="H69997"/>
</dbReference>
<dbReference type="RefSeq" id="NP_390930.1">
    <property type="nucleotide sequence ID" value="NC_000964.3"/>
</dbReference>
<dbReference type="RefSeq" id="WP_004399093.1">
    <property type="nucleotide sequence ID" value="NZ_OZ025638.1"/>
</dbReference>
<dbReference type="SMR" id="O34696"/>
<dbReference type="FunCoup" id="O34696">
    <property type="interactions" value="147"/>
</dbReference>
<dbReference type="STRING" id="224308.BSU30520"/>
<dbReference type="PaxDb" id="224308-BSU30520"/>
<dbReference type="EnsemblBacteria" id="CAB15030">
    <property type="protein sequence ID" value="CAB15030"/>
    <property type="gene ID" value="BSU_30520"/>
</dbReference>
<dbReference type="GeneID" id="937238"/>
<dbReference type="KEGG" id="bsu:BSU30520"/>
<dbReference type="PATRIC" id="fig|224308.179.peg.3310"/>
<dbReference type="eggNOG" id="COG0663">
    <property type="taxonomic scope" value="Bacteria"/>
</dbReference>
<dbReference type="InParanoid" id="O34696"/>
<dbReference type="OrthoDB" id="9803036at2"/>
<dbReference type="PhylomeDB" id="O34696"/>
<dbReference type="BioCyc" id="BSUB:BSU30520-MONOMER"/>
<dbReference type="Proteomes" id="UP000001570">
    <property type="component" value="Chromosome"/>
</dbReference>
<dbReference type="GO" id="GO:0016740">
    <property type="term" value="F:transferase activity"/>
    <property type="evidence" value="ECO:0007669"/>
    <property type="project" value="UniProtKB-KW"/>
</dbReference>
<dbReference type="CDD" id="cd04645">
    <property type="entry name" value="LbH_gamma_CA_like"/>
    <property type="match status" value="1"/>
</dbReference>
<dbReference type="Gene3D" id="2.160.10.10">
    <property type="entry name" value="Hexapeptide repeat proteins"/>
    <property type="match status" value="1"/>
</dbReference>
<dbReference type="InterPro" id="IPR001451">
    <property type="entry name" value="Hexapep"/>
</dbReference>
<dbReference type="InterPro" id="IPR047324">
    <property type="entry name" value="LbH_gamma_CA-like"/>
</dbReference>
<dbReference type="InterPro" id="IPR050484">
    <property type="entry name" value="Transf_Hexapept/Carb_Anhydrase"/>
</dbReference>
<dbReference type="InterPro" id="IPR011004">
    <property type="entry name" value="Trimer_LpxA-like_sf"/>
</dbReference>
<dbReference type="PANTHER" id="PTHR13061">
    <property type="entry name" value="DYNACTIN SUBUNIT P25"/>
    <property type="match status" value="1"/>
</dbReference>
<dbReference type="PANTHER" id="PTHR13061:SF29">
    <property type="entry name" value="GAMMA CARBONIC ANHYDRASE-LIKE 1, MITOCHONDRIAL-RELATED"/>
    <property type="match status" value="1"/>
</dbReference>
<dbReference type="Pfam" id="PF00132">
    <property type="entry name" value="Hexapep"/>
    <property type="match status" value="1"/>
</dbReference>
<dbReference type="SUPFAM" id="SSF51161">
    <property type="entry name" value="Trimeric LpxA-like enzymes"/>
    <property type="match status" value="1"/>
</dbReference>
<reference key="1">
    <citation type="journal article" date="1997" name="Microbiology">
        <title>Sequencing and functional annotation of the Bacillus subtilis genes in the 200 kb rrnB-dnaB region.</title>
        <authorList>
            <person name="Lapidus A."/>
            <person name="Galleron N."/>
            <person name="Sorokin A."/>
            <person name="Ehrlich S.D."/>
        </authorList>
    </citation>
    <scope>NUCLEOTIDE SEQUENCE [GENOMIC DNA]</scope>
</reference>
<reference key="2">
    <citation type="journal article" date="1997" name="Nature">
        <title>The complete genome sequence of the Gram-positive bacterium Bacillus subtilis.</title>
        <authorList>
            <person name="Kunst F."/>
            <person name="Ogasawara N."/>
            <person name="Moszer I."/>
            <person name="Albertini A.M."/>
            <person name="Alloni G."/>
            <person name="Azevedo V."/>
            <person name="Bertero M.G."/>
            <person name="Bessieres P."/>
            <person name="Bolotin A."/>
            <person name="Borchert S."/>
            <person name="Borriss R."/>
            <person name="Boursier L."/>
            <person name="Brans A."/>
            <person name="Braun M."/>
            <person name="Brignell S.C."/>
            <person name="Bron S."/>
            <person name="Brouillet S."/>
            <person name="Bruschi C.V."/>
            <person name="Caldwell B."/>
            <person name="Capuano V."/>
            <person name="Carter N.M."/>
            <person name="Choi S.-K."/>
            <person name="Codani J.-J."/>
            <person name="Connerton I.F."/>
            <person name="Cummings N.J."/>
            <person name="Daniel R.A."/>
            <person name="Denizot F."/>
            <person name="Devine K.M."/>
            <person name="Duesterhoeft A."/>
            <person name="Ehrlich S.D."/>
            <person name="Emmerson P.T."/>
            <person name="Entian K.-D."/>
            <person name="Errington J."/>
            <person name="Fabret C."/>
            <person name="Ferrari E."/>
            <person name="Foulger D."/>
            <person name="Fritz C."/>
            <person name="Fujita M."/>
            <person name="Fujita Y."/>
            <person name="Fuma S."/>
            <person name="Galizzi A."/>
            <person name="Galleron N."/>
            <person name="Ghim S.-Y."/>
            <person name="Glaser P."/>
            <person name="Goffeau A."/>
            <person name="Golightly E.J."/>
            <person name="Grandi G."/>
            <person name="Guiseppi G."/>
            <person name="Guy B.J."/>
            <person name="Haga K."/>
            <person name="Haiech J."/>
            <person name="Harwood C.R."/>
            <person name="Henaut A."/>
            <person name="Hilbert H."/>
            <person name="Holsappel S."/>
            <person name="Hosono S."/>
            <person name="Hullo M.-F."/>
            <person name="Itaya M."/>
            <person name="Jones L.-M."/>
            <person name="Joris B."/>
            <person name="Karamata D."/>
            <person name="Kasahara Y."/>
            <person name="Klaerr-Blanchard M."/>
            <person name="Klein C."/>
            <person name="Kobayashi Y."/>
            <person name="Koetter P."/>
            <person name="Koningstein G."/>
            <person name="Krogh S."/>
            <person name="Kumano M."/>
            <person name="Kurita K."/>
            <person name="Lapidus A."/>
            <person name="Lardinois S."/>
            <person name="Lauber J."/>
            <person name="Lazarevic V."/>
            <person name="Lee S.-M."/>
            <person name="Levine A."/>
            <person name="Liu H."/>
            <person name="Masuda S."/>
            <person name="Mauel C."/>
            <person name="Medigue C."/>
            <person name="Medina N."/>
            <person name="Mellado R.P."/>
            <person name="Mizuno M."/>
            <person name="Moestl D."/>
            <person name="Nakai S."/>
            <person name="Noback M."/>
            <person name="Noone D."/>
            <person name="O'Reilly M."/>
            <person name="Ogawa K."/>
            <person name="Ogiwara A."/>
            <person name="Oudega B."/>
            <person name="Park S.-H."/>
            <person name="Parro V."/>
            <person name="Pohl T.M."/>
            <person name="Portetelle D."/>
            <person name="Porwollik S."/>
            <person name="Prescott A.M."/>
            <person name="Presecan E."/>
            <person name="Pujic P."/>
            <person name="Purnelle B."/>
            <person name="Rapoport G."/>
            <person name="Rey M."/>
            <person name="Reynolds S."/>
            <person name="Rieger M."/>
            <person name="Rivolta C."/>
            <person name="Rocha E."/>
            <person name="Roche B."/>
            <person name="Rose M."/>
            <person name="Sadaie Y."/>
            <person name="Sato T."/>
            <person name="Scanlan E."/>
            <person name="Schleich S."/>
            <person name="Schroeter R."/>
            <person name="Scoffone F."/>
            <person name="Sekiguchi J."/>
            <person name="Sekowska A."/>
            <person name="Seror S.J."/>
            <person name="Serror P."/>
            <person name="Shin B.-S."/>
            <person name="Soldo B."/>
            <person name="Sorokin A."/>
            <person name="Tacconi E."/>
            <person name="Takagi T."/>
            <person name="Takahashi H."/>
            <person name="Takemaru K."/>
            <person name="Takeuchi M."/>
            <person name="Tamakoshi A."/>
            <person name="Tanaka T."/>
            <person name="Terpstra P."/>
            <person name="Tognoni A."/>
            <person name="Tosato V."/>
            <person name="Uchiyama S."/>
            <person name="Vandenbol M."/>
            <person name="Vannier F."/>
            <person name="Vassarotti A."/>
            <person name="Viari A."/>
            <person name="Wambutt R."/>
            <person name="Wedler E."/>
            <person name="Wedler H."/>
            <person name="Weitzenegger T."/>
            <person name="Winters P."/>
            <person name="Wipat A."/>
            <person name="Yamamoto H."/>
            <person name="Yamane K."/>
            <person name="Yasumoto K."/>
            <person name="Yata K."/>
            <person name="Yoshida K."/>
            <person name="Yoshikawa H.-F."/>
            <person name="Zumstein E."/>
            <person name="Yoshikawa H."/>
            <person name="Danchin A."/>
        </authorList>
    </citation>
    <scope>NUCLEOTIDE SEQUENCE [LARGE SCALE GENOMIC DNA]</scope>
    <source>
        <strain>168</strain>
    </source>
</reference>
<protein>
    <recommendedName>
        <fullName>Uncharacterized transferase YtoA</fullName>
        <ecNumber>2.-.-.-</ecNumber>
    </recommendedName>
</protein>